<organism>
    <name type="scientific">Staphylococcus aureus (strain MSSA476)</name>
    <dbReference type="NCBI Taxonomy" id="282459"/>
    <lineage>
        <taxon>Bacteria</taxon>
        <taxon>Bacillati</taxon>
        <taxon>Bacillota</taxon>
        <taxon>Bacilli</taxon>
        <taxon>Bacillales</taxon>
        <taxon>Staphylococcaceae</taxon>
        <taxon>Staphylococcus</taxon>
    </lineage>
</organism>
<comment type="function">
    <text evidence="1">Catalyzes the conversion of inosine 5'-phosphate (IMP) to xanthosine 5'-phosphate (XMP), the first committed and rate-limiting step in the de novo synthesis of guanine nucleotides, and therefore plays an important role in the regulation of cell growth.</text>
</comment>
<comment type="catalytic activity">
    <reaction evidence="1">
        <text>IMP + NAD(+) + H2O = XMP + NADH + H(+)</text>
        <dbReference type="Rhea" id="RHEA:11708"/>
        <dbReference type="ChEBI" id="CHEBI:15377"/>
        <dbReference type="ChEBI" id="CHEBI:15378"/>
        <dbReference type="ChEBI" id="CHEBI:57464"/>
        <dbReference type="ChEBI" id="CHEBI:57540"/>
        <dbReference type="ChEBI" id="CHEBI:57945"/>
        <dbReference type="ChEBI" id="CHEBI:58053"/>
        <dbReference type="EC" id="1.1.1.205"/>
    </reaction>
</comment>
<comment type="cofactor">
    <cofactor evidence="1">
        <name>K(+)</name>
        <dbReference type="ChEBI" id="CHEBI:29103"/>
    </cofactor>
</comment>
<comment type="activity regulation">
    <text evidence="1">Mycophenolic acid (MPA) is a non-competitive inhibitor that prevents formation of the closed enzyme conformation by binding to the same site as the amobile flap. In contrast, mizoribine monophosphate (MZP) is a competitive inhibitor that induces the closed conformation. MPA is a potent inhibitor of mammalian IMPDHs but a poor inhibitor of the bacterial enzymes. MZP is a more potent inhibitor of bacterial IMPDH.</text>
</comment>
<comment type="pathway">
    <text evidence="1">Purine metabolism; XMP biosynthesis via de novo pathway; XMP from IMP: step 1/1.</text>
</comment>
<comment type="subunit">
    <text evidence="1">Homotetramer.</text>
</comment>
<comment type="similarity">
    <text evidence="1">Belongs to the IMPDH/GMPR family.</text>
</comment>
<feature type="chain" id="PRO_0000093710" description="Inosine-5'-monophosphate dehydrogenase">
    <location>
        <begin position="1"/>
        <end position="488"/>
    </location>
</feature>
<feature type="domain" description="CBS 1" evidence="1">
    <location>
        <begin position="95"/>
        <end position="153"/>
    </location>
</feature>
<feature type="domain" description="CBS 2" evidence="1">
    <location>
        <begin position="157"/>
        <end position="216"/>
    </location>
</feature>
<feature type="region of interest" description="Disordered" evidence="2">
    <location>
        <begin position="468"/>
        <end position="488"/>
    </location>
</feature>
<feature type="compositionally biased region" description="Polar residues" evidence="2">
    <location>
        <begin position="475"/>
        <end position="488"/>
    </location>
</feature>
<feature type="active site" description="Thioimidate intermediate" evidence="1">
    <location>
        <position position="307"/>
    </location>
</feature>
<feature type="active site" description="Proton acceptor" evidence="1">
    <location>
        <position position="403"/>
    </location>
</feature>
<feature type="binding site" evidence="1">
    <location>
        <position position="250"/>
    </location>
    <ligand>
        <name>NAD(+)</name>
        <dbReference type="ChEBI" id="CHEBI:57540"/>
    </ligand>
</feature>
<feature type="binding site" evidence="1">
    <location>
        <begin position="300"/>
        <end position="302"/>
    </location>
    <ligand>
        <name>NAD(+)</name>
        <dbReference type="ChEBI" id="CHEBI:57540"/>
    </ligand>
</feature>
<feature type="binding site" description="in other chain" evidence="1">
    <location>
        <position position="302"/>
    </location>
    <ligand>
        <name>K(+)</name>
        <dbReference type="ChEBI" id="CHEBI:29103"/>
        <note>ligand shared between two tetrameric partners</note>
    </ligand>
</feature>
<feature type="binding site" description="in other chain" evidence="1">
    <location>
        <position position="304"/>
    </location>
    <ligand>
        <name>K(+)</name>
        <dbReference type="ChEBI" id="CHEBI:29103"/>
        <note>ligand shared between two tetrameric partners</note>
    </ligand>
</feature>
<feature type="binding site" evidence="1">
    <location>
        <position position="305"/>
    </location>
    <ligand>
        <name>IMP</name>
        <dbReference type="ChEBI" id="CHEBI:58053"/>
    </ligand>
</feature>
<feature type="binding site" description="in other chain" evidence="1">
    <location>
        <position position="307"/>
    </location>
    <ligand>
        <name>K(+)</name>
        <dbReference type="ChEBI" id="CHEBI:29103"/>
        <note>ligand shared between two tetrameric partners</note>
    </ligand>
</feature>
<feature type="binding site" evidence="1">
    <location>
        <begin position="340"/>
        <end position="342"/>
    </location>
    <ligand>
        <name>IMP</name>
        <dbReference type="ChEBI" id="CHEBI:58053"/>
    </ligand>
</feature>
<feature type="binding site" evidence="1">
    <location>
        <begin position="363"/>
        <end position="364"/>
    </location>
    <ligand>
        <name>IMP</name>
        <dbReference type="ChEBI" id="CHEBI:58053"/>
    </ligand>
</feature>
<feature type="binding site" evidence="1">
    <location>
        <begin position="387"/>
        <end position="391"/>
    </location>
    <ligand>
        <name>IMP</name>
        <dbReference type="ChEBI" id="CHEBI:58053"/>
    </ligand>
</feature>
<feature type="binding site" evidence="1">
    <location>
        <position position="417"/>
    </location>
    <ligand>
        <name>IMP</name>
        <dbReference type="ChEBI" id="CHEBI:58053"/>
    </ligand>
</feature>
<feature type="binding site" evidence="1">
    <location>
        <position position="471"/>
    </location>
    <ligand>
        <name>K(+)</name>
        <dbReference type="ChEBI" id="CHEBI:29103"/>
        <note>ligand shared between two tetrameric partners</note>
    </ligand>
</feature>
<feature type="binding site" evidence="1">
    <location>
        <position position="472"/>
    </location>
    <ligand>
        <name>K(+)</name>
        <dbReference type="ChEBI" id="CHEBI:29103"/>
        <note>ligand shared between two tetrameric partners</note>
    </ligand>
</feature>
<feature type="binding site" evidence="1">
    <location>
        <position position="473"/>
    </location>
    <ligand>
        <name>K(+)</name>
        <dbReference type="ChEBI" id="CHEBI:29103"/>
        <note>ligand shared between two tetrameric partners</note>
    </ligand>
</feature>
<dbReference type="EC" id="1.1.1.205" evidence="1"/>
<dbReference type="EMBL" id="BX571857">
    <property type="protein sequence ID" value="CAG42138.1"/>
    <property type="molecule type" value="Genomic_DNA"/>
</dbReference>
<dbReference type="RefSeq" id="WP_000264071.1">
    <property type="nucleotide sequence ID" value="NC_002953.3"/>
</dbReference>
<dbReference type="SMR" id="Q6GC82"/>
<dbReference type="GeneID" id="66838696"/>
<dbReference type="KEGG" id="sas:SAS0366"/>
<dbReference type="HOGENOM" id="CLU_022552_1_0_9"/>
<dbReference type="UniPathway" id="UPA00601">
    <property type="reaction ID" value="UER00295"/>
</dbReference>
<dbReference type="GO" id="GO:0003938">
    <property type="term" value="F:IMP dehydrogenase activity"/>
    <property type="evidence" value="ECO:0007669"/>
    <property type="project" value="UniProtKB-UniRule"/>
</dbReference>
<dbReference type="GO" id="GO:0046872">
    <property type="term" value="F:metal ion binding"/>
    <property type="evidence" value="ECO:0007669"/>
    <property type="project" value="UniProtKB-UniRule"/>
</dbReference>
<dbReference type="GO" id="GO:0000166">
    <property type="term" value="F:nucleotide binding"/>
    <property type="evidence" value="ECO:0007669"/>
    <property type="project" value="UniProtKB-UniRule"/>
</dbReference>
<dbReference type="GO" id="GO:0006177">
    <property type="term" value="P:GMP biosynthetic process"/>
    <property type="evidence" value="ECO:0007669"/>
    <property type="project" value="UniProtKB-UniRule"/>
</dbReference>
<dbReference type="GO" id="GO:0006183">
    <property type="term" value="P:GTP biosynthetic process"/>
    <property type="evidence" value="ECO:0007669"/>
    <property type="project" value="TreeGrafter"/>
</dbReference>
<dbReference type="CDD" id="cd04601">
    <property type="entry name" value="CBS_pair_IMPDH"/>
    <property type="match status" value="1"/>
</dbReference>
<dbReference type="CDD" id="cd00381">
    <property type="entry name" value="IMPDH"/>
    <property type="match status" value="1"/>
</dbReference>
<dbReference type="FunFam" id="3.20.20.70:FF:000003">
    <property type="entry name" value="GMP reductase"/>
    <property type="match status" value="1"/>
</dbReference>
<dbReference type="Gene3D" id="3.20.20.70">
    <property type="entry name" value="Aldolase class I"/>
    <property type="match status" value="1"/>
</dbReference>
<dbReference type="HAMAP" id="MF_01964">
    <property type="entry name" value="IMPDH"/>
    <property type="match status" value="1"/>
</dbReference>
<dbReference type="InterPro" id="IPR013785">
    <property type="entry name" value="Aldolase_TIM"/>
</dbReference>
<dbReference type="InterPro" id="IPR000644">
    <property type="entry name" value="CBS_dom"/>
</dbReference>
<dbReference type="InterPro" id="IPR046342">
    <property type="entry name" value="CBS_dom_sf"/>
</dbReference>
<dbReference type="InterPro" id="IPR005990">
    <property type="entry name" value="IMP_DH"/>
</dbReference>
<dbReference type="InterPro" id="IPR015875">
    <property type="entry name" value="IMP_DH/GMP_Rdtase_CS"/>
</dbReference>
<dbReference type="InterPro" id="IPR001093">
    <property type="entry name" value="IMP_DH_GMPRt"/>
</dbReference>
<dbReference type="NCBIfam" id="TIGR01302">
    <property type="entry name" value="IMP_dehydrog"/>
    <property type="match status" value="1"/>
</dbReference>
<dbReference type="PANTHER" id="PTHR11911:SF111">
    <property type="entry name" value="INOSINE-5'-MONOPHOSPHATE DEHYDROGENASE"/>
    <property type="match status" value="1"/>
</dbReference>
<dbReference type="PANTHER" id="PTHR11911">
    <property type="entry name" value="INOSINE-5-MONOPHOSPHATE DEHYDROGENASE RELATED"/>
    <property type="match status" value="1"/>
</dbReference>
<dbReference type="Pfam" id="PF00571">
    <property type="entry name" value="CBS"/>
    <property type="match status" value="2"/>
</dbReference>
<dbReference type="Pfam" id="PF00478">
    <property type="entry name" value="IMPDH"/>
    <property type="match status" value="1"/>
</dbReference>
<dbReference type="PIRSF" id="PIRSF000130">
    <property type="entry name" value="IMPDH"/>
    <property type="match status" value="1"/>
</dbReference>
<dbReference type="SMART" id="SM00116">
    <property type="entry name" value="CBS"/>
    <property type="match status" value="2"/>
</dbReference>
<dbReference type="SMART" id="SM01240">
    <property type="entry name" value="IMPDH"/>
    <property type="match status" value="1"/>
</dbReference>
<dbReference type="SUPFAM" id="SSF54631">
    <property type="entry name" value="CBS-domain pair"/>
    <property type="match status" value="1"/>
</dbReference>
<dbReference type="SUPFAM" id="SSF51412">
    <property type="entry name" value="Inosine monophosphate dehydrogenase (IMPDH)"/>
    <property type="match status" value="1"/>
</dbReference>
<dbReference type="PROSITE" id="PS51371">
    <property type="entry name" value="CBS"/>
    <property type="match status" value="2"/>
</dbReference>
<dbReference type="PROSITE" id="PS00487">
    <property type="entry name" value="IMP_DH_GMP_RED"/>
    <property type="match status" value="1"/>
</dbReference>
<accession>Q6GC82</accession>
<protein>
    <recommendedName>
        <fullName evidence="1">Inosine-5'-monophosphate dehydrogenase</fullName>
        <shortName evidence="1">IMP dehydrogenase</shortName>
        <shortName evidence="1">IMPD</shortName>
        <shortName evidence="1">IMPDH</shortName>
        <ecNumber evidence="1">1.1.1.205</ecNumber>
    </recommendedName>
</protein>
<evidence type="ECO:0000255" key="1">
    <source>
        <dbReference type="HAMAP-Rule" id="MF_01964"/>
    </source>
</evidence>
<evidence type="ECO:0000256" key="2">
    <source>
        <dbReference type="SAM" id="MobiDB-lite"/>
    </source>
</evidence>
<name>IMDH_STAAS</name>
<sequence length="488" mass="52851">MWESKFAKESLTFDDVLLIPAQSDILPKDVDLSVQLSDKVKLNIPVISAGMDTVTESKMAIAMARQGGLGVIHKNMGVEEQADEVQKVKRSENGVISNPFFLTPEESVYEAEALMGKYRISGVPIVDNKEDRNLVGILTNRDLRFIEDFSIKIVDVMTQENLITAPVNTTLEEAEKILQKHKIEKLPLVKDGRLEGLITIKDIEKVIEFPNAAKDEHGRLLVAAAIGISKDTDIRAQKLVEAGVDVLVIDTAHGHSKGVIDQVKHIKKTYPEITLVAGNVATAEATKDLFEAGADIVKVGIGPGSICTTRVVAGVGVPQITAIYDCATEARKHGKAIIADGGIKFSGDIIKALAAGGHAVMLGSLLAGTEESPGATEIFQGRQYKVYRGMGSLGAMEKGSNDRYFQEDKAPKKFVPEGIEGRTAYKGALQDTIYQLMGGVRAGMGYTGSHDLRELREEAQFTRMGPAGLAESHPHNIQITKESPNYSF</sequence>
<gene>
    <name evidence="1" type="primary">guaB</name>
    <name type="ordered locus">SAS0366</name>
</gene>
<reference key="1">
    <citation type="journal article" date="2004" name="Proc. Natl. Acad. Sci. U.S.A.">
        <title>Complete genomes of two clinical Staphylococcus aureus strains: evidence for the rapid evolution of virulence and drug resistance.</title>
        <authorList>
            <person name="Holden M.T.G."/>
            <person name="Feil E.J."/>
            <person name="Lindsay J.A."/>
            <person name="Peacock S.J."/>
            <person name="Day N.P.J."/>
            <person name="Enright M.C."/>
            <person name="Foster T.J."/>
            <person name="Moore C.E."/>
            <person name="Hurst L."/>
            <person name="Atkin R."/>
            <person name="Barron A."/>
            <person name="Bason N."/>
            <person name="Bentley S.D."/>
            <person name="Chillingworth C."/>
            <person name="Chillingworth T."/>
            <person name="Churcher C."/>
            <person name="Clark L."/>
            <person name="Corton C."/>
            <person name="Cronin A."/>
            <person name="Doggett J."/>
            <person name="Dowd L."/>
            <person name="Feltwell T."/>
            <person name="Hance Z."/>
            <person name="Harris B."/>
            <person name="Hauser H."/>
            <person name="Holroyd S."/>
            <person name="Jagels K."/>
            <person name="James K.D."/>
            <person name="Lennard N."/>
            <person name="Line A."/>
            <person name="Mayes R."/>
            <person name="Moule S."/>
            <person name="Mungall K."/>
            <person name="Ormond D."/>
            <person name="Quail M.A."/>
            <person name="Rabbinowitsch E."/>
            <person name="Rutherford K.M."/>
            <person name="Sanders M."/>
            <person name="Sharp S."/>
            <person name="Simmonds M."/>
            <person name="Stevens K."/>
            <person name="Whitehead S."/>
            <person name="Barrell B.G."/>
            <person name="Spratt B.G."/>
            <person name="Parkhill J."/>
        </authorList>
    </citation>
    <scope>NUCLEOTIDE SEQUENCE [LARGE SCALE GENOMIC DNA]</scope>
    <source>
        <strain>MSSA476</strain>
    </source>
</reference>
<proteinExistence type="inferred from homology"/>
<keyword id="KW-0129">CBS domain</keyword>
<keyword id="KW-0332">GMP biosynthesis</keyword>
<keyword id="KW-0479">Metal-binding</keyword>
<keyword id="KW-0520">NAD</keyword>
<keyword id="KW-0560">Oxidoreductase</keyword>
<keyword id="KW-0630">Potassium</keyword>
<keyword id="KW-0658">Purine biosynthesis</keyword>
<keyword id="KW-0677">Repeat</keyword>